<feature type="chain" id="PRO_0000184263" description="Ribosomal RNA small subunit methyltransferase G">
    <location>
        <begin position="1"/>
        <end position="178"/>
    </location>
</feature>
<feature type="binding site" evidence="1">
    <location>
        <position position="54"/>
    </location>
    <ligand>
        <name>S-adenosyl-L-methionine</name>
        <dbReference type="ChEBI" id="CHEBI:59789"/>
    </ligand>
</feature>
<feature type="binding site" evidence="1">
    <location>
        <position position="59"/>
    </location>
    <ligand>
        <name>S-adenosyl-L-methionine</name>
        <dbReference type="ChEBI" id="CHEBI:59789"/>
    </ligand>
</feature>
<feature type="binding site" evidence="1">
    <location>
        <begin position="105"/>
        <end position="106"/>
    </location>
    <ligand>
        <name>S-adenosyl-L-methionine</name>
        <dbReference type="ChEBI" id="CHEBI:59789"/>
    </ligand>
</feature>
<feature type="binding site" evidence="1">
    <location>
        <position position="120"/>
    </location>
    <ligand>
        <name>S-adenosyl-L-methionine</name>
        <dbReference type="ChEBI" id="CHEBI:59789"/>
    </ligand>
</feature>
<evidence type="ECO:0000255" key="1">
    <source>
        <dbReference type="HAMAP-Rule" id="MF_00074"/>
    </source>
</evidence>
<accession>O25703</accession>
<keyword id="KW-0963">Cytoplasm</keyword>
<keyword id="KW-0489">Methyltransferase</keyword>
<keyword id="KW-1185">Reference proteome</keyword>
<keyword id="KW-0698">rRNA processing</keyword>
<keyword id="KW-0949">S-adenosyl-L-methionine</keyword>
<keyword id="KW-0808">Transferase</keyword>
<name>RSMG_HELPY</name>
<reference key="1">
    <citation type="journal article" date="1997" name="Nature">
        <title>The complete genome sequence of the gastric pathogen Helicobacter pylori.</title>
        <authorList>
            <person name="Tomb J.-F."/>
            <person name="White O."/>
            <person name="Kerlavage A.R."/>
            <person name="Clayton R.A."/>
            <person name="Sutton G.G."/>
            <person name="Fleischmann R.D."/>
            <person name="Ketchum K.A."/>
            <person name="Klenk H.-P."/>
            <person name="Gill S.R."/>
            <person name="Dougherty B.A."/>
            <person name="Nelson K.E."/>
            <person name="Quackenbush J."/>
            <person name="Zhou L."/>
            <person name="Kirkness E.F."/>
            <person name="Peterson S.N."/>
            <person name="Loftus B.J."/>
            <person name="Richardson D.L."/>
            <person name="Dodson R.J."/>
            <person name="Khalak H.G."/>
            <person name="Glodek A."/>
            <person name="McKenney K."/>
            <person name="FitzGerald L.M."/>
            <person name="Lee N."/>
            <person name="Adams M.D."/>
            <person name="Hickey E.K."/>
            <person name="Berg D.E."/>
            <person name="Gocayne J.D."/>
            <person name="Utterback T.R."/>
            <person name="Peterson J.D."/>
            <person name="Kelley J.M."/>
            <person name="Cotton M.D."/>
            <person name="Weidman J.F."/>
            <person name="Fujii C."/>
            <person name="Bowman C."/>
            <person name="Watthey L."/>
            <person name="Wallin E."/>
            <person name="Hayes W.S."/>
            <person name="Borodovsky M."/>
            <person name="Karp P.D."/>
            <person name="Smith H.O."/>
            <person name="Fraser C.M."/>
            <person name="Venter J.C."/>
        </authorList>
    </citation>
    <scope>NUCLEOTIDE SEQUENCE [LARGE SCALE GENOMIC DNA]</scope>
    <source>
        <strain>ATCC 700392 / 26695</strain>
    </source>
</reference>
<dbReference type="EC" id="2.1.1.170" evidence="1"/>
<dbReference type="EMBL" id="AE000511">
    <property type="protein sequence ID" value="AAD08103.1"/>
    <property type="molecule type" value="Genomic_DNA"/>
</dbReference>
<dbReference type="PIR" id="G64652">
    <property type="entry name" value="G64652"/>
</dbReference>
<dbReference type="RefSeq" id="NP_207854.1">
    <property type="nucleotide sequence ID" value="NC_000915.1"/>
</dbReference>
<dbReference type="RefSeq" id="WP_001068828.1">
    <property type="nucleotide sequence ID" value="NC_018939.1"/>
</dbReference>
<dbReference type="SMR" id="O25703"/>
<dbReference type="DIP" id="DIP-3515N"/>
<dbReference type="FunCoup" id="O25703">
    <property type="interactions" value="340"/>
</dbReference>
<dbReference type="IntAct" id="O25703">
    <property type="interactions" value="3"/>
</dbReference>
<dbReference type="MINT" id="O25703"/>
<dbReference type="STRING" id="85962.HP_1063"/>
<dbReference type="PaxDb" id="85962-C694_05495"/>
<dbReference type="EnsemblBacteria" id="AAD08103">
    <property type="protein sequence ID" value="AAD08103"/>
    <property type="gene ID" value="HP_1063"/>
</dbReference>
<dbReference type="KEGG" id="heo:C694_05495"/>
<dbReference type="KEGG" id="hpy:HP_1063"/>
<dbReference type="PATRIC" id="fig|85962.47.peg.1142"/>
<dbReference type="eggNOG" id="COG0357">
    <property type="taxonomic scope" value="Bacteria"/>
</dbReference>
<dbReference type="InParanoid" id="O25703"/>
<dbReference type="OrthoDB" id="9808773at2"/>
<dbReference type="PhylomeDB" id="O25703"/>
<dbReference type="Proteomes" id="UP000000429">
    <property type="component" value="Chromosome"/>
</dbReference>
<dbReference type="GO" id="GO:0005829">
    <property type="term" value="C:cytosol"/>
    <property type="evidence" value="ECO:0000318"/>
    <property type="project" value="GO_Central"/>
</dbReference>
<dbReference type="GO" id="GO:0070043">
    <property type="term" value="F:rRNA (guanine-N7-)-methyltransferase activity"/>
    <property type="evidence" value="ECO:0000318"/>
    <property type="project" value="GO_Central"/>
</dbReference>
<dbReference type="CDD" id="cd02440">
    <property type="entry name" value="AdoMet_MTases"/>
    <property type="match status" value="1"/>
</dbReference>
<dbReference type="FunFam" id="3.40.50.150:FF:000511">
    <property type="entry name" value="Ribosomal RNA small subunit methyltransferase G"/>
    <property type="match status" value="1"/>
</dbReference>
<dbReference type="Gene3D" id="3.40.50.150">
    <property type="entry name" value="Vaccinia Virus protein VP39"/>
    <property type="match status" value="1"/>
</dbReference>
<dbReference type="HAMAP" id="MF_00074">
    <property type="entry name" value="16SrRNA_methyltr_G"/>
    <property type="match status" value="1"/>
</dbReference>
<dbReference type="InterPro" id="IPR003682">
    <property type="entry name" value="rRNA_ssu_MeTfrase_G"/>
</dbReference>
<dbReference type="InterPro" id="IPR029063">
    <property type="entry name" value="SAM-dependent_MTases_sf"/>
</dbReference>
<dbReference type="NCBIfam" id="TIGR00138">
    <property type="entry name" value="rsmG_gidB"/>
    <property type="match status" value="1"/>
</dbReference>
<dbReference type="PANTHER" id="PTHR31760">
    <property type="entry name" value="S-ADENOSYL-L-METHIONINE-DEPENDENT METHYLTRANSFERASES SUPERFAMILY PROTEIN"/>
    <property type="match status" value="1"/>
</dbReference>
<dbReference type="PANTHER" id="PTHR31760:SF0">
    <property type="entry name" value="S-ADENOSYL-L-METHIONINE-DEPENDENT METHYLTRANSFERASES SUPERFAMILY PROTEIN"/>
    <property type="match status" value="1"/>
</dbReference>
<dbReference type="Pfam" id="PF02527">
    <property type="entry name" value="GidB"/>
    <property type="match status" value="1"/>
</dbReference>
<dbReference type="PIRSF" id="PIRSF003078">
    <property type="entry name" value="GidB"/>
    <property type="match status" value="1"/>
</dbReference>
<dbReference type="SUPFAM" id="SSF53335">
    <property type="entry name" value="S-adenosyl-L-methionine-dependent methyltransferases"/>
    <property type="match status" value="1"/>
</dbReference>
<gene>
    <name evidence="1" type="primary">rsmG</name>
    <name type="ordered locus">HP_1063</name>
</gene>
<protein>
    <recommendedName>
        <fullName evidence="1">Ribosomal RNA small subunit methyltransferase G</fullName>
        <ecNumber evidence="1">2.1.1.170</ecNumber>
    </recommendedName>
    <alternativeName>
        <fullName evidence="1">16S rRNA 7-methylguanosine methyltransferase</fullName>
        <shortName evidence="1">16S rRNA m7G methyltransferase</shortName>
    </alternativeName>
</protein>
<organism>
    <name type="scientific">Helicobacter pylori (strain ATCC 700392 / 26695)</name>
    <name type="common">Campylobacter pylori</name>
    <dbReference type="NCBI Taxonomy" id="85962"/>
    <lineage>
        <taxon>Bacteria</taxon>
        <taxon>Pseudomonadati</taxon>
        <taxon>Campylobacterota</taxon>
        <taxon>Epsilonproteobacteria</taxon>
        <taxon>Campylobacterales</taxon>
        <taxon>Helicobacteraceae</taxon>
        <taxon>Helicobacter</taxon>
    </lineage>
</organism>
<sequence>MNPLLQDYARILLEWNQTHNLSGAKNLSELEPQITDALKPLEFIKDFKSCLDIGSGAGLPAIPLALEKPEVKFILLEPRIKRAAFLNYLKSVLPLKNIEIIKKRLEDYQNLLQVDLITSRAVASSSFLIEKSQRFLKDKGYFLFYKGEQLKDEIACKDTECFMHQKRVYFYKSKESLC</sequence>
<comment type="function">
    <text evidence="1">Specifically methylates the N7 position of guanine in position 527 of 16S rRNA.</text>
</comment>
<comment type="catalytic activity">
    <reaction evidence="1">
        <text>guanosine(527) in 16S rRNA + S-adenosyl-L-methionine = N(7)-methylguanosine(527) in 16S rRNA + S-adenosyl-L-homocysteine</text>
        <dbReference type="Rhea" id="RHEA:42732"/>
        <dbReference type="Rhea" id="RHEA-COMP:10209"/>
        <dbReference type="Rhea" id="RHEA-COMP:10210"/>
        <dbReference type="ChEBI" id="CHEBI:57856"/>
        <dbReference type="ChEBI" id="CHEBI:59789"/>
        <dbReference type="ChEBI" id="CHEBI:74269"/>
        <dbReference type="ChEBI" id="CHEBI:74480"/>
        <dbReference type="EC" id="2.1.1.170"/>
    </reaction>
</comment>
<comment type="subcellular location">
    <subcellularLocation>
        <location evidence="1">Cytoplasm</location>
    </subcellularLocation>
</comment>
<comment type="similarity">
    <text evidence="1">Belongs to the methyltransferase superfamily. RNA methyltransferase RsmG family.</text>
</comment>
<proteinExistence type="inferred from homology"/>